<feature type="chain" id="PRO_0000148549" description="Fibrillarin-like rRNA/tRNA 2'-O-methyltransferase">
    <location>
        <begin position="1"/>
        <end position="232"/>
    </location>
</feature>
<feature type="binding site">
    <location>
        <begin position="89"/>
        <end position="90"/>
    </location>
    <ligand>
        <name>S-adenosyl-L-methionine</name>
        <dbReference type="ChEBI" id="CHEBI:59789"/>
    </ligand>
</feature>
<feature type="binding site">
    <location>
        <begin position="108"/>
        <end position="109"/>
    </location>
    <ligand>
        <name>S-adenosyl-L-methionine</name>
        <dbReference type="ChEBI" id="CHEBI:59789"/>
    </ligand>
</feature>
<feature type="binding site">
    <location>
        <begin position="133"/>
        <end position="134"/>
    </location>
    <ligand>
        <name>S-adenosyl-L-methionine</name>
        <dbReference type="ChEBI" id="CHEBI:59789"/>
    </ligand>
</feature>
<feature type="binding site">
    <location>
        <begin position="153"/>
        <end position="156"/>
    </location>
    <ligand>
        <name>S-adenosyl-L-methionine</name>
        <dbReference type="ChEBI" id="CHEBI:59789"/>
    </ligand>
</feature>
<feature type="mutagenesis site" description="Loss of methyltransferase activity." evidence="2">
    <original>A</original>
    <variation>V</variation>
    <location>
        <position position="85"/>
    </location>
</feature>
<feature type="mutagenesis site" description="Decreased methyltransferase activity." evidence="2">
    <original>P</original>
    <variation>A</variation>
    <location>
        <position position="129"/>
    </location>
</feature>
<feature type="strand" evidence="7">
    <location>
        <begin position="4"/>
        <end position="9"/>
    </location>
</feature>
<feature type="strand" evidence="7">
    <location>
        <begin position="15"/>
        <end position="20"/>
    </location>
</feature>
<feature type="strand" evidence="6">
    <location>
        <begin position="21"/>
        <end position="23"/>
    </location>
</feature>
<feature type="strand" evidence="7">
    <location>
        <begin position="25"/>
        <end position="30"/>
    </location>
</feature>
<feature type="strand" evidence="7">
    <location>
        <begin position="38"/>
        <end position="40"/>
    </location>
</feature>
<feature type="strand" evidence="7">
    <location>
        <begin position="43"/>
        <end position="46"/>
    </location>
</feature>
<feature type="strand" evidence="7">
    <location>
        <begin position="49"/>
        <end position="53"/>
    </location>
</feature>
<feature type="turn" evidence="7">
    <location>
        <begin position="56"/>
        <end position="58"/>
    </location>
</feature>
<feature type="helix" evidence="7">
    <location>
        <begin position="60"/>
        <end position="66"/>
    </location>
</feature>
<feature type="strand" evidence="7">
    <location>
        <begin position="79"/>
        <end position="83"/>
    </location>
</feature>
<feature type="helix" evidence="7">
    <location>
        <begin position="89"/>
        <end position="98"/>
    </location>
</feature>
<feature type="turn" evidence="7">
    <location>
        <begin position="99"/>
        <end position="101"/>
    </location>
</feature>
<feature type="strand" evidence="7">
    <location>
        <begin position="102"/>
        <end position="108"/>
    </location>
</feature>
<feature type="helix" evidence="7">
    <location>
        <begin position="111"/>
        <end position="122"/>
    </location>
</feature>
<feature type="strand" evidence="7">
    <location>
        <begin position="127"/>
        <end position="131"/>
    </location>
</feature>
<feature type="helix" evidence="7">
    <location>
        <begin position="137"/>
        <end position="140"/>
    </location>
</feature>
<feature type="turn" evidence="7">
    <location>
        <begin position="141"/>
        <end position="143"/>
    </location>
</feature>
<feature type="strand" evidence="7">
    <location>
        <begin position="147"/>
        <end position="152"/>
    </location>
</feature>
<feature type="helix" evidence="7">
    <location>
        <begin position="159"/>
        <end position="170"/>
    </location>
</feature>
<feature type="strand" evidence="7">
    <location>
        <begin position="171"/>
        <end position="182"/>
    </location>
</feature>
<feature type="helix" evidence="7">
    <location>
        <begin position="183"/>
        <end position="186"/>
    </location>
</feature>
<feature type="strand" evidence="6">
    <location>
        <begin position="188"/>
        <end position="190"/>
    </location>
</feature>
<feature type="helix" evidence="7">
    <location>
        <begin position="192"/>
        <end position="204"/>
    </location>
</feature>
<feature type="turn" evidence="7">
    <location>
        <begin position="205"/>
        <end position="207"/>
    </location>
</feature>
<feature type="strand" evidence="7">
    <location>
        <begin position="208"/>
        <end position="215"/>
    </location>
</feature>
<feature type="turn" evidence="7">
    <location>
        <begin position="217"/>
        <end position="219"/>
    </location>
</feature>
<feature type="strand" evidence="7">
    <location>
        <begin position="223"/>
        <end position="230"/>
    </location>
</feature>
<name>FLPA_SACS2</name>
<keyword id="KW-0002">3D-structure</keyword>
<keyword id="KW-0489">Methyltransferase</keyword>
<keyword id="KW-1185">Reference proteome</keyword>
<keyword id="KW-0694">RNA-binding</keyword>
<keyword id="KW-0698">rRNA processing</keyword>
<keyword id="KW-0808">Transferase</keyword>
<keyword id="KW-0819">tRNA processing</keyword>
<reference key="1">
    <citation type="journal article" date="2001" name="Proc. Natl. Acad. Sci. U.S.A.">
        <title>The complete genome of the crenarchaeon Sulfolobus solfataricus P2.</title>
        <authorList>
            <person name="She Q."/>
            <person name="Singh R.K."/>
            <person name="Confalonieri F."/>
            <person name="Zivanovic Y."/>
            <person name="Allard G."/>
            <person name="Awayez M.J."/>
            <person name="Chan-Weiher C.C.-Y."/>
            <person name="Clausen I.G."/>
            <person name="Curtis B.A."/>
            <person name="De Moors A."/>
            <person name="Erauso G."/>
            <person name="Fletcher C."/>
            <person name="Gordon P.M.K."/>
            <person name="Heikamp-de Jong I."/>
            <person name="Jeffries A.C."/>
            <person name="Kozera C.J."/>
            <person name="Medina N."/>
            <person name="Peng X."/>
            <person name="Thi-Ngoc H.P."/>
            <person name="Redder P."/>
            <person name="Schenk M.E."/>
            <person name="Theriault C."/>
            <person name="Tolstrup N."/>
            <person name="Charlebois R.L."/>
            <person name="Doolittle W.F."/>
            <person name="Duguet M."/>
            <person name="Gaasterland T."/>
            <person name="Garrett R.A."/>
            <person name="Ragan M.A."/>
            <person name="Sensen C.W."/>
            <person name="Van der Oost J."/>
        </authorList>
    </citation>
    <scope>NUCLEOTIDE SEQUENCE [LARGE SCALE GENOMIC DNA]</scope>
    <source>
        <strain>ATCC 35092 / DSM 1617 / JCM 11322 / P2</strain>
    </source>
</reference>
<reference key="2">
    <citation type="journal article" date="2002" name="Proc. Natl. Acad. Sci. U.S.A.">
        <title>In vitro reconstitution and activity of a C/D box methylation guide ribonucleoprotein complex.</title>
        <authorList>
            <person name="Omer A.D."/>
            <person name="Ziesche S."/>
            <person name="Ebhardt H."/>
            <person name="Dennis P.P."/>
        </authorList>
    </citation>
    <scope>FUNCTION</scope>
    <scope>MUTAGENESIS OF ALA-85 AND PRO-129</scope>
    <scope>SUBUNIT</scope>
</reference>
<reference key="3">
    <citation type="journal article" date="2004" name="Mol. Microbiol.">
        <title>RNA-guided nucleotide modification of ribosomal and non-ribosomal RNAs in Archaea.</title>
        <authorList>
            <person name="Ziesche S.M."/>
            <person name="Omer A.D."/>
            <person name="Dennis P.P."/>
        </authorList>
    </citation>
    <scope>FUNCTION</scope>
</reference>
<reference key="4">
    <citation type="journal article" date="2009" name="Proc. Natl. Acad. Sci. U.S.A.">
        <title>Structural organization of box C/D RNA-guided RNA methyltransferase.</title>
        <authorList>
            <person name="Ye K."/>
            <person name="Jia R."/>
            <person name="Lin J."/>
            <person name="Ju M."/>
            <person name="Peng J."/>
            <person name="Xu A."/>
            <person name="Zhang L."/>
        </authorList>
    </citation>
    <scope>X-RAY CRYSTALLOGRAPHY (2.6 ANGSTROMS) IN COMPLEXES WITH RNA; S-ADENOSYL-L-METHIONINE; NOP5 AND RPL7AE</scope>
    <scope>SUBUNIT</scope>
</reference>
<reference key="5">
    <citation type="journal article" date="2011" name="Nature">
        <title>Structural basis for site-specific ribose methylation by box C/D RNA protein complexes.</title>
        <authorList>
            <person name="Lin J."/>
            <person name="Lai S."/>
            <person name="Jia R."/>
            <person name="Xu A."/>
            <person name="Zhang L."/>
            <person name="Lu J."/>
            <person name="Ye K."/>
        </authorList>
    </citation>
    <scope>X-RAY CRYSTALLOGRAPHY (3.15 ANGSTROMS) IN COMPLEX WITH GUIDE RNA; SUBSTRATE RNA AND RPL7AE</scope>
    <scope>SUBUNIT</scope>
    <scope>FUNCTION</scope>
</reference>
<organism>
    <name type="scientific">Saccharolobus solfataricus (strain ATCC 35092 / DSM 1617 / JCM 11322 / P2)</name>
    <name type="common">Sulfolobus solfataricus</name>
    <dbReference type="NCBI Taxonomy" id="273057"/>
    <lineage>
        <taxon>Archaea</taxon>
        <taxon>Thermoproteota</taxon>
        <taxon>Thermoprotei</taxon>
        <taxon>Sulfolobales</taxon>
        <taxon>Sulfolobaceae</taxon>
        <taxon>Saccharolobus</taxon>
    </lineage>
</organism>
<dbReference type="EC" id="2.1.1.-" evidence="1"/>
<dbReference type="EMBL" id="AE006641">
    <property type="protein sequence ID" value="AAK41216.1"/>
    <property type="molecule type" value="Genomic_DNA"/>
</dbReference>
<dbReference type="PIR" id="A99245">
    <property type="entry name" value="A99245"/>
</dbReference>
<dbReference type="RefSeq" id="WP_009992372.1">
    <property type="nucleotide sequence ID" value="NC_002754.1"/>
</dbReference>
<dbReference type="PDB" id="3ID5">
    <property type="method" value="X-ray"/>
    <property type="resolution" value="4.01 A"/>
    <property type="chains" value="B/F=1-232"/>
</dbReference>
<dbReference type="PDB" id="3ID6">
    <property type="method" value="X-ray"/>
    <property type="resolution" value="2.60 A"/>
    <property type="chains" value="C=1-232"/>
</dbReference>
<dbReference type="PDB" id="3PLA">
    <property type="method" value="X-ray"/>
    <property type="resolution" value="3.15 A"/>
    <property type="chains" value="E/F/M=1-232"/>
</dbReference>
<dbReference type="PDB" id="5JPQ">
    <property type="method" value="EM"/>
    <property type="resolution" value="7.30 A"/>
    <property type="chains" value="W/X=1-232"/>
</dbReference>
<dbReference type="PDB" id="7XPL">
    <property type="method" value="X-ray"/>
    <property type="resolution" value="2.21 A"/>
    <property type="chains" value="E/F=1-232"/>
</dbReference>
<dbReference type="PDBsum" id="3ID5"/>
<dbReference type="PDBsum" id="3ID6"/>
<dbReference type="PDBsum" id="3PLA"/>
<dbReference type="PDBsum" id="5JPQ"/>
<dbReference type="PDBsum" id="7XPL"/>
<dbReference type="SMR" id="P58032"/>
<dbReference type="DIP" id="DIP-48939N"/>
<dbReference type="FunCoup" id="P58032">
    <property type="interactions" value="199"/>
</dbReference>
<dbReference type="IntAct" id="P58032">
    <property type="interactions" value="2"/>
</dbReference>
<dbReference type="STRING" id="273057.SSO0940"/>
<dbReference type="PaxDb" id="273057-SSO0940"/>
<dbReference type="EnsemblBacteria" id="AAK41216">
    <property type="protein sequence ID" value="AAK41216"/>
    <property type="gene ID" value="SSO0940"/>
</dbReference>
<dbReference type="KEGG" id="sso:SSO0940"/>
<dbReference type="PATRIC" id="fig|273057.12.peg.936"/>
<dbReference type="eggNOG" id="arCOG00078">
    <property type="taxonomic scope" value="Archaea"/>
</dbReference>
<dbReference type="HOGENOM" id="CLU_059055_2_0_2"/>
<dbReference type="InParanoid" id="P58032"/>
<dbReference type="PhylomeDB" id="P58032"/>
<dbReference type="EvolutionaryTrace" id="P58032"/>
<dbReference type="Proteomes" id="UP000001974">
    <property type="component" value="Chromosome"/>
</dbReference>
<dbReference type="GO" id="GO:1990259">
    <property type="term" value="F:histone H2AQ104 methyltransferase activity"/>
    <property type="evidence" value="ECO:0000318"/>
    <property type="project" value="GO_Central"/>
</dbReference>
<dbReference type="GO" id="GO:0003723">
    <property type="term" value="F:RNA binding"/>
    <property type="evidence" value="ECO:0000318"/>
    <property type="project" value="GO_Central"/>
</dbReference>
<dbReference type="GO" id="GO:0008649">
    <property type="term" value="F:rRNA methyltransferase activity"/>
    <property type="evidence" value="ECO:0000318"/>
    <property type="project" value="GO_Central"/>
</dbReference>
<dbReference type="GO" id="GO:0000494">
    <property type="term" value="P:box C/D sno(s)RNA 3'-end processing"/>
    <property type="evidence" value="ECO:0000318"/>
    <property type="project" value="GO_Central"/>
</dbReference>
<dbReference type="GO" id="GO:0031167">
    <property type="term" value="P:rRNA methylation"/>
    <property type="evidence" value="ECO:0000318"/>
    <property type="project" value="GO_Central"/>
</dbReference>
<dbReference type="GO" id="GO:0008033">
    <property type="term" value="P:tRNA processing"/>
    <property type="evidence" value="ECO:0007669"/>
    <property type="project" value="UniProtKB-UniRule"/>
</dbReference>
<dbReference type="CDD" id="cd02440">
    <property type="entry name" value="AdoMet_MTases"/>
    <property type="match status" value="1"/>
</dbReference>
<dbReference type="FunFam" id="3.30.200.20:FF:000613">
    <property type="entry name" value="Fibrillarin-like rRNA/tRNA 2'-O-methyltransferase"/>
    <property type="match status" value="1"/>
</dbReference>
<dbReference type="FunFam" id="3.40.50.150:FF:000381">
    <property type="entry name" value="Fibrillarin-like rRNA/tRNA 2'-O-methyltransferase"/>
    <property type="match status" value="1"/>
</dbReference>
<dbReference type="Gene3D" id="3.30.200.20">
    <property type="entry name" value="Phosphorylase Kinase, domain 1"/>
    <property type="match status" value="1"/>
</dbReference>
<dbReference type="Gene3D" id="3.40.50.150">
    <property type="entry name" value="Vaccinia Virus protein VP39"/>
    <property type="match status" value="1"/>
</dbReference>
<dbReference type="HAMAP" id="MF_00351">
    <property type="entry name" value="RNA_methyltransf_FlpA"/>
    <property type="match status" value="1"/>
</dbReference>
<dbReference type="InterPro" id="IPR000692">
    <property type="entry name" value="Fibrillarin"/>
</dbReference>
<dbReference type="InterPro" id="IPR020813">
    <property type="entry name" value="Fibrillarin_CS"/>
</dbReference>
<dbReference type="InterPro" id="IPR029063">
    <property type="entry name" value="SAM-dependent_MTases_sf"/>
</dbReference>
<dbReference type="NCBIfam" id="NF003275">
    <property type="entry name" value="PRK04266.1-1"/>
    <property type="match status" value="1"/>
</dbReference>
<dbReference type="NCBIfam" id="NF003276">
    <property type="entry name" value="PRK04266.1-2"/>
    <property type="match status" value="1"/>
</dbReference>
<dbReference type="NCBIfam" id="NF003277">
    <property type="entry name" value="PRK04266.1-3"/>
    <property type="match status" value="1"/>
</dbReference>
<dbReference type="PANTHER" id="PTHR10335:SF17">
    <property type="entry name" value="FIBRILLARIN"/>
    <property type="match status" value="1"/>
</dbReference>
<dbReference type="PANTHER" id="PTHR10335">
    <property type="entry name" value="RRNA 2-O-METHYLTRANSFERASE FIBRILLARIN"/>
    <property type="match status" value="1"/>
</dbReference>
<dbReference type="Pfam" id="PF01269">
    <property type="entry name" value="Fibrillarin"/>
    <property type="match status" value="1"/>
</dbReference>
<dbReference type="PIRSF" id="PIRSF006540">
    <property type="entry name" value="Nop17p"/>
    <property type="match status" value="1"/>
</dbReference>
<dbReference type="PRINTS" id="PR00052">
    <property type="entry name" value="FIBRILLARIN"/>
</dbReference>
<dbReference type="SMART" id="SM01206">
    <property type="entry name" value="Fibrillarin"/>
    <property type="match status" value="1"/>
</dbReference>
<dbReference type="SUPFAM" id="SSF53335">
    <property type="entry name" value="S-adenosyl-L-methionine-dependent methyltransferases"/>
    <property type="match status" value="1"/>
</dbReference>
<dbReference type="PROSITE" id="PS00566">
    <property type="entry name" value="FIBRILLARIN"/>
    <property type="match status" value="1"/>
</dbReference>
<comment type="function">
    <text evidence="1 2 3 5">Involved in pre-rRNA and tRNA processing. Utilizes the methyl donor S-adenosyl-L-methionine to catalyze the site-specific 2'-hydroxyl methylation of ribose moieties in rRNA and tRNA. Site specificity is provided by a guide RNA that base pairs with the substrate. Methylation occurs at a characteristic distance from the sequence involved in base pairing with the guide RNA.</text>
</comment>
<comment type="subunit">
    <text evidence="1 2 4 5">Interacts with nop5. Component of box C/D small ribonucleoprotein (sRNP) particles that contain rpl7ae, FlpA and nop5, plus a guide RNA. These sRNP particles form homodimers, giving rise to an asymmetric holoenzyme.</text>
</comment>
<comment type="interaction">
    <interactant intactId="EBI-2944159">
        <id>P58032</id>
    </interactant>
    <interactant intactId="EBI-2944135">
        <id>Q97ZH3</id>
        <label>SSO0939</label>
    </interactant>
    <organismsDiffer>false</organismsDiffer>
    <experiments>5</experiments>
</comment>
<comment type="similarity">
    <text evidence="1">Belongs to the methyltransferase superfamily. Fibrillarin family.</text>
</comment>
<sequence>MSEVITVKQTNMENIYECEFNDGSFRLCTRNLVPNFNVYGERLIKYEGVEYREWNAFRSKLAGAILKGLKTNPIRKGTKVLYLGAASGTTISHVSDIIELNGKAYGVEFSPRVVRELLLVAQRRPNIFPLLADARFPQSYKSVVENVDVLYVDIAQPDQTDIAIYNAKFFLKVNGDMLLVIKARSIDVTKDPKEIYKTEVEKLENSNFETIQIINLDPYDKDHAIVLSKYKG</sequence>
<accession>P58032</accession>
<protein>
    <recommendedName>
        <fullName evidence="1">Fibrillarin-like rRNA/tRNA 2'-O-methyltransferase</fullName>
        <shortName>FIB</shortName>
        <ecNumber evidence="1">2.1.1.-</ecNumber>
    </recommendedName>
</protein>
<evidence type="ECO:0000255" key="1">
    <source>
        <dbReference type="HAMAP-Rule" id="MF_00351"/>
    </source>
</evidence>
<evidence type="ECO:0000269" key="2">
    <source>
    </source>
</evidence>
<evidence type="ECO:0000269" key="3">
    <source>
    </source>
</evidence>
<evidence type="ECO:0000269" key="4">
    <source>
    </source>
</evidence>
<evidence type="ECO:0000269" key="5">
    <source>
    </source>
</evidence>
<evidence type="ECO:0007829" key="6">
    <source>
        <dbReference type="PDB" id="3PLA"/>
    </source>
</evidence>
<evidence type="ECO:0007829" key="7">
    <source>
        <dbReference type="PDB" id="7XPL"/>
    </source>
</evidence>
<gene>
    <name evidence="1" type="primary">flpA</name>
    <name type="ordered locus">SSO0940</name>
    <name type="ORF">C33_014</name>
</gene>
<proteinExistence type="evidence at protein level"/>